<reference key="1">
    <citation type="journal article" date="2003" name="J. Bacteriol.">
        <title>Complete genome sequence of the oral pathogenic bacterium Porphyromonas gingivalis strain W83.</title>
        <authorList>
            <person name="Nelson K.E."/>
            <person name="Fleischmann R.D."/>
            <person name="DeBoy R.T."/>
            <person name="Paulsen I.T."/>
            <person name="Fouts D.E."/>
            <person name="Eisen J.A."/>
            <person name="Daugherty S.C."/>
            <person name="Dodson R.J."/>
            <person name="Durkin A.S."/>
            <person name="Gwinn M.L."/>
            <person name="Haft D.H."/>
            <person name="Kolonay J.F."/>
            <person name="Nelson W.C."/>
            <person name="Mason T.M."/>
            <person name="Tallon L."/>
            <person name="Gray J."/>
            <person name="Granger D."/>
            <person name="Tettelin H."/>
            <person name="Dong H."/>
            <person name="Galvin J.L."/>
            <person name="Duncan M.J."/>
            <person name="Dewhirst F.E."/>
            <person name="Fraser C.M."/>
        </authorList>
    </citation>
    <scope>NUCLEOTIDE SEQUENCE [LARGE SCALE GENOMIC DNA]</scope>
    <source>
        <strain>ATCC BAA-308 / W83</strain>
    </source>
</reference>
<reference key="2">
    <citation type="journal article" date="2000" name="Infect. Immun.">
        <title>Formation of methyl mercaptan from L-methionine by Porphyromonas gingivalis.</title>
        <authorList>
            <person name="Yoshimura M."/>
            <person name="Nakano Y."/>
            <person name="Yamashita Y."/>
            <person name="Oho T."/>
            <person name="Saito T."/>
            <person name="Koga T."/>
        </authorList>
    </citation>
    <scope>FUNCTION</scope>
    <scope>CATALYTIC ACTIVITY</scope>
    <scope>BIOPHYSICOCHEMICAL PROPERTIES</scope>
    <scope>DISRUPTION PHENOTYPE</scope>
    <source>
        <strain>ATCC BAA-308 / W83</strain>
    </source>
</reference>
<proteinExistence type="evidence at protein level"/>
<evidence type="ECO:0000250" key="1">
    <source>
        <dbReference type="UniProtKB" id="P13254"/>
    </source>
</evidence>
<evidence type="ECO:0000250" key="2">
    <source>
        <dbReference type="UniProtKB" id="Q73KL7"/>
    </source>
</evidence>
<evidence type="ECO:0000269" key="3">
    <source>
    </source>
</evidence>
<evidence type="ECO:0000303" key="4">
    <source>
    </source>
</evidence>
<evidence type="ECO:0000305" key="5"/>
<evidence type="ECO:0000305" key="6">
    <source>
    </source>
</evidence>
<evidence type="ECO:0000312" key="7">
    <source>
        <dbReference type="EMBL" id="AAQ65554.1"/>
    </source>
</evidence>
<accession>Q7MX71</accession>
<feature type="chain" id="PRO_0000436014" description="L-methionine gamma-lyase">
    <location>
        <begin position="1"/>
        <end position="399"/>
    </location>
</feature>
<feature type="binding site" evidence="1">
    <location>
        <begin position="59"/>
        <end position="61"/>
    </location>
    <ligand>
        <name>pyridoxal 5'-phosphate</name>
        <dbReference type="ChEBI" id="CHEBI:597326"/>
        <note>ligand shared between dimeric partners</note>
    </ligand>
</feature>
<feature type="binding site" description="in other chain" evidence="1">
    <location>
        <begin position="89"/>
        <end position="90"/>
    </location>
    <ligand>
        <name>pyridoxal 5'-phosphate</name>
        <dbReference type="ChEBI" id="CHEBI:597326"/>
        <note>ligand shared between dimeric partners</note>
    </ligand>
</feature>
<feature type="binding site" evidence="1">
    <location>
        <position position="114"/>
    </location>
    <ligand>
        <name>substrate</name>
    </ligand>
</feature>
<feature type="binding site" description="in other chain" evidence="1">
    <location>
        <begin position="209"/>
        <end position="211"/>
    </location>
    <ligand>
        <name>pyridoxal 5'-phosphate</name>
        <dbReference type="ChEBI" id="CHEBI:597326"/>
        <note>ligand shared between dimeric partners</note>
    </ligand>
</feature>
<feature type="binding site" evidence="1">
    <location>
        <position position="376"/>
    </location>
    <ligand>
        <name>substrate</name>
    </ligand>
</feature>
<feature type="modified residue" description="N6-(pyridoxal phosphate)lysine" evidence="1">
    <location>
        <position position="212"/>
    </location>
</feature>
<organism>
    <name type="scientific">Porphyromonas gingivalis (strain ATCC BAA-308 / W83)</name>
    <dbReference type="NCBI Taxonomy" id="242619"/>
    <lineage>
        <taxon>Bacteria</taxon>
        <taxon>Pseudomonadati</taxon>
        <taxon>Bacteroidota</taxon>
        <taxon>Bacteroidia</taxon>
        <taxon>Bacteroidales</taxon>
        <taxon>Porphyromonadaceae</taxon>
        <taxon>Porphyromonas</taxon>
    </lineage>
</organism>
<comment type="function">
    <text evidence="2 3">Catalyzes the alpha,gamma-elimination of L-methionine to produce methanethiol, 2-oxobutanoate and ammonia; methanethiol (methyl mercaptan) is considered to be one of the main causes of the oral malodor in periodontal disease and may also play a role in the pathogenicity of P.gingivalis in that disease (PubMed:11083813). Is also able to catalyze the alpha,gamma-elimination of L-homocysteine (By similarity).</text>
</comment>
<comment type="catalytic activity">
    <reaction evidence="3">
        <text>L-methionine + H2O = methanethiol + 2-oxobutanoate + NH4(+)</text>
        <dbReference type="Rhea" id="RHEA:23800"/>
        <dbReference type="ChEBI" id="CHEBI:15377"/>
        <dbReference type="ChEBI" id="CHEBI:16007"/>
        <dbReference type="ChEBI" id="CHEBI:16763"/>
        <dbReference type="ChEBI" id="CHEBI:28938"/>
        <dbReference type="ChEBI" id="CHEBI:57844"/>
        <dbReference type="EC" id="4.4.1.11"/>
    </reaction>
</comment>
<comment type="catalytic activity">
    <reaction evidence="2">
        <text>L-homocysteine + H2O = 2-oxobutanoate + hydrogen sulfide + NH4(+) + H(+)</text>
        <dbReference type="Rhea" id="RHEA:14501"/>
        <dbReference type="ChEBI" id="CHEBI:15377"/>
        <dbReference type="ChEBI" id="CHEBI:15378"/>
        <dbReference type="ChEBI" id="CHEBI:16763"/>
        <dbReference type="ChEBI" id="CHEBI:28938"/>
        <dbReference type="ChEBI" id="CHEBI:29919"/>
        <dbReference type="ChEBI" id="CHEBI:58199"/>
        <dbReference type="EC" id="4.4.1.2"/>
    </reaction>
</comment>
<comment type="cofactor">
    <cofactor evidence="1 5">
        <name>pyridoxal 5'-phosphate</name>
        <dbReference type="ChEBI" id="CHEBI:597326"/>
    </cofactor>
</comment>
<comment type="biophysicochemical properties">
    <kinetics>
        <KM evidence="3">23.1 mM for L-methionine</KM>
        <Vmax evidence="3">21.9 umol/min/mg enzyme</Vmax>
    </kinetics>
</comment>
<comment type="subunit">
    <text evidence="1">Homotetramer; dimer of active dimers.</text>
</comment>
<comment type="disruption phenotype">
    <text evidence="3">Cells lacking this gene show a marked decrease in the formation of methyl mercaptan from L-methionine and decreased virulence compared with the wild-type strain W83. The hydrogen sulfide content in the culture supernatants of mutant and wild-type strains is similar.</text>
</comment>
<comment type="similarity">
    <text evidence="5">Belongs to the trans-sulfuration enzymes family. L-methionine gamma-lyase subfamily.</text>
</comment>
<comment type="sequence caution" evidence="5">
    <conflict type="erroneous initiation">
        <sequence resource="EMBL-CDS" id="AAQ65554"/>
    </conflict>
    <text>Truncated N-terminus.</text>
</comment>
<keyword id="KW-0456">Lyase</keyword>
<keyword id="KW-0663">Pyridoxal phosphate</keyword>
<keyword id="KW-1185">Reference proteome</keyword>
<keyword id="KW-0843">Virulence</keyword>
<sequence>MKKEDLMRSGFATRAIHGGAIENAFGCLATPIYQTSTFVFDTAEQGGRRFAGEEDGYIYTRLGNPNCTQVEEKLAMLEGGEAAASASSGIGAISSAIWVCVKAGDHIVAGKTLYGCTFAFLTHGLSRYGVEVTLVDTRHPEEVEAAIRPNTKLVYLETPANPNMYLTDIKAVCDIAHKHEGVRVMVDNTYCTPYICRPLELGADIVVHSATKYLNGHGDVIAGFVVGKEDYIKEVKLVGVKDLTGANMSPFDAYLISRGMKTLQIRMEQHCRNAQTVAEFLEKHPAVEAVYFPGLPSFPQYELAKKQMALPGAMIAFEVKGGCEAGKKLMNNLHLCSLAVSLGDTETLIQHPASMTHSPYTPEERAASDISEGLVRLSVGLENVEDIIADLKHGLDSLI</sequence>
<gene>
    <name evidence="4" type="primary">mgl</name>
    <name evidence="7" type="synonym">megL</name>
    <name evidence="7" type="ordered locus">PG_0343</name>
</gene>
<name>MEGL_PORGI</name>
<protein>
    <recommendedName>
        <fullName evidence="6">L-methionine gamma-lyase</fullName>
        <shortName evidence="5">MGL</shortName>
        <ecNumber evidence="3">4.4.1.11</ecNumber>
    </recommendedName>
    <alternativeName>
        <fullName evidence="2">Homocysteine desulfhydrase</fullName>
        <ecNumber evidence="2">4.4.1.2</ecNumber>
    </alternativeName>
    <alternativeName>
        <fullName evidence="4">L-methionine-alpha-deamino-gamma-mercaptomethane-lyase</fullName>
        <shortName evidence="4">METase</shortName>
    </alternativeName>
</protein>
<dbReference type="EC" id="4.4.1.11" evidence="3"/>
<dbReference type="EC" id="4.4.1.2" evidence="2"/>
<dbReference type="EMBL" id="AE015924">
    <property type="protein sequence ID" value="AAQ65554.1"/>
    <property type="status" value="ALT_INIT"/>
    <property type="molecule type" value="Genomic_DNA"/>
</dbReference>
<dbReference type="RefSeq" id="WP_005873786.1">
    <property type="nucleotide sequence ID" value="NC_002950.2"/>
</dbReference>
<dbReference type="SMR" id="Q7MX71"/>
<dbReference type="STRING" id="242619.PG_0343"/>
<dbReference type="EnsemblBacteria" id="AAQ65554">
    <property type="protein sequence ID" value="AAQ65554"/>
    <property type="gene ID" value="PG_0343"/>
</dbReference>
<dbReference type="GeneID" id="29256789"/>
<dbReference type="KEGG" id="pgi:PG_0343"/>
<dbReference type="eggNOG" id="COG0626">
    <property type="taxonomic scope" value="Bacteria"/>
</dbReference>
<dbReference type="HOGENOM" id="CLU_018986_2_3_10"/>
<dbReference type="BRENDA" id="4.4.1.11">
    <property type="organism ID" value="756"/>
</dbReference>
<dbReference type="SABIO-RK" id="Q7MX71"/>
<dbReference type="PHI-base" id="PHI:7938"/>
<dbReference type="Proteomes" id="UP000000588">
    <property type="component" value="Chromosome"/>
</dbReference>
<dbReference type="GO" id="GO:0005737">
    <property type="term" value="C:cytoplasm"/>
    <property type="evidence" value="ECO:0007669"/>
    <property type="project" value="TreeGrafter"/>
</dbReference>
<dbReference type="GO" id="GO:0047982">
    <property type="term" value="F:homocysteine desulfhydrase activity"/>
    <property type="evidence" value="ECO:0007669"/>
    <property type="project" value="UniProtKB-EC"/>
</dbReference>
<dbReference type="GO" id="GO:0018826">
    <property type="term" value="F:methionine gamma-lyase activity"/>
    <property type="evidence" value="ECO:0007669"/>
    <property type="project" value="UniProtKB-EC"/>
</dbReference>
<dbReference type="GO" id="GO:0030170">
    <property type="term" value="F:pyridoxal phosphate binding"/>
    <property type="evidence" value="ECO:0007669"/>
    <property type="project" value="InterPro"/>
</dbReference>
<dbReference type="GO" id="GO:0019346">
    <property type="term" value="P:transsulfuration"/>
    <property type="evidence" value="ECO:0007669"/>
    <property type="project" value="InterPro"/>
</dbReference>
<dbReference type="CDD" id="cd00614">
    <property type="entry name" value="CGS_like"/>
    <property type="match status" value="1"/>
</dbReference>
<dbReference type="FunFam" id="3.40.640.10:FF:000046">
    <property type="entry name" value="Cystathionine gamma-lyase"/>
    <property type="match status" value="1"/>
</dbReference>
<dbReference type="FunFam" id="3.90.1150.10:FF:000008">
    <property type="entry name" value="Cystathionine gamma-synthase"/>
    <property type="match status" value="1"/>
</dbReference>
<dbReference type="Gene3D" id="3.90.1150.10">
    <property type="entry name" value="Aspartate Aminotransferase, domain 1"/>
    <property type="match status" value="1"/>
</dbReference>
<dbReference type="Gene3D" id="3.40.640.10">
    <property type="entry name" value="Type I PLP-dependent aspartate aminotransferase-like (Major domain)"/>
    <property type="match status" value="1"/>
</dbReference>
<dbReference type="InterPro" id="IPR000277">
    <property type="entry name" value="Cys/Met-Metab_PyrdxlP-dep_enz"/>
</dbReference>
<dbReference type="InterPro" id="IPR054542">
    <property type="entry name" value="Cys_met_metab_PP"/>
</dbReference>
<dbReference type="InterPro" id="IPR006237">
    <property type="entry name" value="L-Met_gamma_lys"/>
</dbReference>
<dbReference type="InterPro" id="IPR015424">
    <property type="entry name" value="PyrdxlP-dep_Trfase"/>
</dbReference>
<dbReference type="InterPro" id="IPR015421">
    <property type="entry name" value="PyrdxlP-dep_Trfase_major"/>
</dbReference>
<dbReference type="InterPro" id="IPR015422">
    <property type="entry name" value="PyrdxlP-dep_Trfase_small"/>
</dbReference>
<dbReference type="NCBIfam" id="TIGR01328">
    <property type="entry name" value="met_gam_lyase"/>
    <property type="match status" value="1"/>
</dbReference>
<dbReference type="NCBIfam" id="NF004876">
    <property type="entry name" value="PRK06234.1"/>
    <property type="match status" value="1"/>
</dbReference>
<dbReference type="PANTHER" id="PTHR11808:SF80">
    <property type="entry name" value="CYSTATHIONINE GAMMA-LYASE"/>
    <property type="match status" value="1"/>
</dbReference>
<dbReference type="PANTHER" id="PTHR11808">
    <property type="entry name" value="TRANS-SULFURATION ENZYME FAMILY MEMBER"/>
    <property type="match status" value="1"/>
</dbReference>
<dbReference type="Pfam" id="PF01053">
    <property type="entry name" value="Cys_Met_Meta_PP"/>
    <property type="match status" value="1"/>
</dbReference>
<dbReference type="PIRSF" id="PIRSF001434">
    <property type="entry name" value="CGS"/>
    <property type="match status" value="1"/>
</dbReference>
<dbReference type="SUPFAM" id="SSF53383">
    <property type="entry name" value="PLP-dependent transferases"/>
    <property type="match status" value="1"/>
</dbReference>
<dbReference type="PROSITE" id="PS00868">
    <property type="entry name" value="CYS_MET_METAB_PP"/>
    <property type="match status" value="1"/>
</dbReference>